<proteinExistence type="inferred from homology"/>
<feature type="chain" id="PRO_0000111604" description="Ribonuclease HII">
    <location>
        <begin position="1"/>
        <end position="209"/>
    </location>
</feature>
<feature type="domain" description="RNase H type-2" evidence="2">
    <location>
        <begin position="20"/>
        <end position="209"/>
    </location>
</feature>
<feature type="binding site" evidence="1">
    <location>
        <position position="26"/>
    </location>
    <ligand>
        <name>a divalent metal cation</name>
        <dbReference type="ChEBI" id="CHEBI:60240"/>
    </ligand>
</feature>
<feature type="binding site" evidence="1">
    <location>
        <position position="27"/>
    </location>
    <ligand>
        <name>a divalent metal cation</name>
        <dbReference type="ChEBI" id="CHEBI:60240"/>
    </ligand>
</feature>
<feature type="binding site" evidence="1">
    <location>
        <position position="122"/>
    </location>
    <ligand>
        <name>a divalent metal cation</name>
        <dbReference type="ChEBI" id="CHEBI:60240"/>
    </ligand>
</feature>
<sequence>MKWIIQEEKEEDHLQILNKDSEIGIDEVGRGSVFGPVFSVAVVLSKKSGLTLKKLGVNDSKKLTPKKRKDFFPKIIALSSDYALGQSSVREIDLLGIRHATELSMIRAVKKLKHMPSELLIDGPLTLRLWEGNQRNIISGDSKFISIATASIIAKVMRDSLMERLESKYPGYFIFKNKGYGTKQHFSSLKKHGLTNLHRKSFLNKLNLI</sequence>
<protein>
    <recommendedName>
        <fullName evidence="1">Ribonuclease HII</fullName>
        <shortName evidence="1">RNase HII</shortName>
        <ecNumber evidence="1">3.1.26.4</ecNumber>
    </recommendedName>
</protein>
<accession>Q7UZZ2</accession>
<reference key="1">
    <citation type="journal article" date="2003" name="Nature">
        <title>Genome divergence in two Prochlorococcus ecotypes reflects oceanic niche differentiation.</title>
        <authorList>
            <person name="Rocap G."/>
            <person name="Larimer F.W."/>
            <person name="Lamerdin J.E."/>
            <person name="Malfatti S."/>
            <person name="Chain P."/>
            <person name="Ahlgren N.A."/>
            <person name="Arellano A."/>
            <person name="Coleman M."/>
            <person name="Hauser L."/>
            <person name="Hess W.R."/>
            <person name="Johnson Z.I."/>
            <person name="Land M.L."/>
            <person name="Lindell D."/>
            <person name="Post A.F."/>
            <person name="Regala W."/>
            <person name="Shah M."/>
            <person name="Shaw S.L."/>
            <person name="Steglich C."/>
            <person name="Sullivan M.B."/>
            <person name="Ting C.S."/>
            <person name="Tolonen A."/>
            <person name="Webb E.A."/>
            <person name="Zinser E.R."/>
            <person name="Chisholm S.W."/>
        </authorList>
    </citation>
    <scope>NUCLEOTIDE SEQUENCE [LARGE SCALE GENOMIC DNA]</scope>
    <source>
        <strain>CCMP1986 / NIES-2087 / MED4</strain>
    </source>
</reference>
<organism>
    <name type="scientific">Prochlorococcus marinus subsp. pastoris (strain CCMP1986 / NIES-2087 / MED4)</name>
    <dbReference type="NCBI Taxonomy" id="59919"/>
    <lineage>
        <taxon>Bacteria</taxon>
        <taxon>Bacillati</taxon>
        <taxon>Cyanobacteriota</taxon>
        <taxon>Cyanophyceae</taxon>
        <taxon>Synechococcales</taxon>
        <taxon>Prochlorococcaceae</taxon>
        <taxon>Prochlorococcus</taxon>
    </lineage>
</organism>
<dbReference type="EC" id="3.1.26.4" evidence="1"/>
<dbReference type="EMBL" id="BX548174">
    <property type="protein sequence ID" value="CAE19961.1"/>
    <property type="molecule type" value="Genomic_DNA"/>
</dbReference>
<dbReference type="RefSeq" id="WP_011133130.1">
    <property type="nucleotide sequence ID" value="NC_005072.1"/>
</dbReference>
<dbReference type="SMR" id="Q7UZZ2"/>
<dbReference type="STRING" id="59919.PMM1502"/>
<dbReference type="KEGG" id="pmm:PMM1502"/>
<dbReference type="eggNOG" id="COG0164">
    <property type="taxonomic scope" value="Bacteria"/>
</dbReference>
<dbReference type="HOGENOM" id="CLU_036532_3_1_3"/>
<dbReference type="OrthoDB" id="9803420at2"/>
<dbReference type="Proteomes" id="UP000001026">
    <property type="component" value="Chromosome"/>
</dbReference>
<dbReference type="GO" id="GO:0005737">
    <property type="term" value="C:cytoplasm"/>
    <property type="evidence" value="ECO:0007669"/>
    <property type="project" value="UniProtKB-SubCell"/>
</dbReference>
<dbReference type="GO" id="GO:0032299">
    <property type="term" value="C:ribonuclease H2 complex"/>
    <property type="evidence" value="ECO:0007669"/>
    <property type="project" value="TreeGrafter"/>
</dbReference>
<dbReference type="GO" id="GO:0030145">
    <property type="term" value="F:manganese ion binding"/>
    <property type="evidence" value="ECO:0007669"/>
    <property type="project" value="UniProtKB-UniRule"/>
</dbReference>
<dbReference type="GO" id="GO:0003723">
    <property type="term" value="F:RNA binding"/>
    <property type="evidence" value="ECO:0007669"/>
    <property type="project" value="InterPro"/>
</dbReference>
<dbReference type="GO" id="GO:0004523">
    <property type="term" value="F:RNA-DNA hybrid ribonuclease activity"/>
    <property type="evidence" value="ECO:0007669"/>
    <property type="project" value="UniProtKB-UniRule"/>
</dbReference>
<dbReference type="GO" id="GO:0043137">
    <property type="term" value="P:DNA replication, removal of RNA primer"/>
    <property type="evidence" value="ECO:0007669"/>
    <property type="project" value="TreeGrafter"/>
</dbReference>
<dbReference type="GO" id="GO:0006298">
    <property type="term" value="P:mismatch repair"/>
    <property type="evidence" value="ECO:0007669"/>
    <property type="project" value="TreeGrafter"/>
</dbReference>
<dbReference type="CDD" id="cd07182">
    <property type="entry name" value="RNase_HII_bacteria_HII_like"/>
    <property type="match status" value="1"/>
</dbReference>
<dbReference type="Gene3D" id="3.30.420.10">
    <property type="entry name" value="Ribonuclease H-like superfamily/Ribonuclease H"/>
    <property type="match status" value="1"/>
</dbReference>
<dbReference type="HAMAP" id="MF_00052_B">
    <property type="entry name" value="RNase_HII_B"/>
    <property type="match status" value="1"/>
</dbReference>
<dbReference type="InterPro" id="IPR022898">
    <property type="entry name" value="RNase_HII"/>
</dbReference>
<dbReference type="InterPro" id="IPR001352">
    <property type="entry name" value="RNase_HII/HIII"/>
</dbReference>
<dbReference type="InterPro" id="IPR024567">
    <property type="entry name" value="RNase_HII/HIII_dom"/>
</dbReference>
<dbReference type="InterPro" id="IPR012337">
    <property type="entry name" value="RNaseH-like_sf"/>
</dbReference>
<dbReference type="InterPro" id="IPR036397">
    <property type="entry name" value="RNaseH_sf"/>
</dbReference>
<dbReference type="NCBIfam" id="NF000595">
    <property type="entry name" value="PRK00015.1-3"/>
    <property type="match status" value="1"/>
</dbReference>
<dbReference type="NCBIfam" id="NF010537">
    <property type="entry name" value="PRK13925.1"/>
    <property type="match status" value="1"/>
</dbReference>
<dbReference type="PANTHER" id="PTHR10954">
    <property type="entry name" value="RIBONUCLEASE H2 SUBUNIT A"/>
    <property type="match status" value="1"/>
</dbReference>
<dbReference type="PANTHER" id="PTHR10954:SF18">
    <property type="entry name" value="RIBONUCLEASE HII"/>
    <property type="match status" value="1"/>
</dbReference>
<dbReference type="Pfam" id="PF01351">
    <property type="entry name" value="RNase_HII"/>
    <property type="match status" value="1"/>
</dbReference>
<dbReference type="SUPFAM" id="SSF53098">
    <property type="entry name" value="Ribonuclease H-like"/>
    <property type="match status" value="1"/>
</dbReference>
<dbReference type="PROSITE" id="PS51975">
    <property type="entry name" value="RNASE_H_2"/>
    <property type="match status" value="1"/>
</dbReference>
<name>RNH2_PROMP</name>
<gene>
    <name evidence="1" type="primary">rnhB</name>
    <name type="ordered locus">PMM1502</name>
</gene>
<keyword id="KW-0963">Cytoplasm</keyword>
<keyword id="KW-0255">Endonuclease</keyword>
<keyword id="KW-0378">Hydrolase</keyword>
<keyword id="KW-0464">Manganese</keyword>
<keyword id="KW-0479">Metal-binding</keyword>
<keyword id="KW-0540">Nuclease</keyword>
<evidence type="ECO:0000255" key="1">
    <source>
        <dbReference type="HAMAP-Rule" id="MF_00052"/>
    </source>
</evidence>
<evidence type="ECO:0000255" key="2">
    <source>
        <dbReference type="PROSITE-ProRule" id="PRU01319"/>
    </source>
</evidence>
<comment type="function">
    <text evidence="1">Endonuclease that specifically degrades the RNA of RNA-DNA hybrids.</text>
</comment>
<comment type="catalytic activity">
    <reaction evidence="1">
        <text>Endonucleolytic cleavage to 5'-phosphomonoester.</text>
        <dbReference type="EC" id="3.1.26.4"/>
    </reaction>
</comment>
<comment type="cofactor">
    <cofactor evidence="1">
        <name>Mn(2+)</name>
        <dbReference type="ChEBI" id="CHEBI:29035"/>
    </cofactor>
    <cofactor evidence="1">
        <name>Mg(2+)</name>
        <dbReference type="ChEBI" id="CHEBI:18420"/>
    </cofactor>
    <text evidence="1">Manganese or magnesium. Binds 1 divalent metal ion per monomer in the absence of substrate. May bind a second metal ion after substrate binding.</text>
</comment>
<comment type="subcellular location">
    <subcellularLocation>
        <location evidence="1">Cytoplasm</location>
    </subcellularLocation>
</comment>
<comment type="similarity">
    <text evidence="1">Belongs to the RNase HII family.</text>
</comment>